<accession>A7H600</accession>
<proteinExistence type="inferred from homology"/>
<dbReference type="EMBL" id="CP000768">
    <property type="protein sequence ID" value="ABS44304.1"/>
    <property type="molecule type" value="Genomic_DNA"/>
</dbReference>
<dbReference type="SMR" id="A7H600"/>
<dbReference type="KEGG" id="cjd:JJD26997_2016"/>
<dbReference type="HOGENOM" id="CLU_015803_1_0_7"/>
<dbReference type="Proteomes" id="UP000002302">
    <property type="component" value="Chromosome"/>
</dbReference>
<dbReference type="GO" id="GO:0005886">
    <property type="term" value="C:plasma membrane"/>
    <property type="evidence" value="ECO:0007669"/>
    <property type="project" value="UniProtKB-SubCell"/>
</dbReference>
<dbReference type="GO" id="GO:0015385">
    <property type="term" value="F:sodium:proton antiporter activity"/>
    <property type="evidence" value="ECO:0007669"/>
    <property type="project" value="TreeGrafter"/>
</dbReference>
<dbReference type="GO" id="GO:0006885">
    <property type="term" value="P:regulation of pH"/>
    <property type="evidence" value="ECO:0007669"/>
    <property type="project" value="InterPro"/>
</dbReference>
<dbReference type="Gene3D" id="1.20.1530.10">
    <property type="entry name" value="Na+/H+ antiporter like domain"/>
    <property type="match status" value="1"/>
</dbReference>
<dbReference type="HAMAP" id="MF_01844">
    <property type="entry name" value="NhaA"/>
    <property type="match status" value="1"/>
</dbReference>
<dbReference type="InterPro" id="IPR023171">
    <property type="entry name" value="Na/H_antiporter_dom_sf"/>
</dbReference>
<dbReference type="InterPro" id="IPR004670">
    <property type="entry name" value="NhaA"/>
</dbReference>
<dbReference type="NCBIfam" id="TIGR00773">
    <property type="entry name" value="NhaA"/>
    <property type="match status" value="1"/>
</dbReference>
<dbReference type="NCBIfam" id="NF007111">
    <property type="entry name" value="PRK09560.1"/>
    <property type="match status" value="1"/>
</dbReference>
<dbReference type="NCBIfam" id="NF007112">
    <property type="entry name" value="PRK09561.1"/>
    <property type="match status" value="1"/>
</dbReference>
<dbReference type="PANTHER" id="PTHR30341:SF0">
    <property type="entry name" value="NA(+)_H(+) ANTIPORTER NHAA"/>
    <property type="match status" value="1"/>
</dbReference>
<dbReference type="PANTHER" id="PTHR30341">
    <property type="entry name" value="SODIUM ION/PROTON ANTIPORTER NHAA-RELATED"/>
    <property type="match status" value="1"/>
</dbReference>
<dbReference type="Pfam" id="PF06965">
    <property type="entry name" value="Na_H_antiport_1"/>
    <property type="match status" value="1"/>
</dbReference>
<sequence length="382" mass="42345">MQMIKKMALSETFPGILLIFFTFLALLCKNSSLSVIYTDFFHANFTVGFVHFQISKSLDLWINDGLIAIFFLCIGLELKYEILRGQLKNIRAVSLPIFGALGGMITPALIFAAINYSYDFAMKGWAIPTATDIAFAVGILMLLGNKIPTSLKLFLLSLAIFDDLGAIVIIALFYTDQLSALAIIICLFCIFALLLLNYYHITHLSLYVLVGVVLWIAMLKSGVHATLAGVIISLFIPLDTKNKKPYLHEVLKDLNPWVVYFILPLFAFANAGIDIRDMHLGSVFSPVSLGIILGLFLGKQLGVFIFCFIAIKLKLAKLPENIKYGKFYGICILTGIGFTMSLFIDGLAYKNSDIFEHADKLAILIASFLSAIVGFIYLKIVK</sequence>
<evidence type="ECO:0000255" key="1">
    <source>
        <dbReference type="HAMAP-Rule" id="MF_01844"/>
    </source>
</evidence>
<name>NHAA2_CAMJD</name>
<feature type="chain" id="PRO_0000334260" description="Na(+)/H(+) antiporter NhaA 2">
    <location>
        <begin position="1"/>
        <end position="382"/>
    </location>
</feature>
<feature type="transmembrane region" description="Helical" evidence="1">
    <location>
        <begin position="7"/>
        <end position="27"/>
    </location>
</feature>
<feature type="transmembrane region" description="Helical" evidence="1">
    <location>
        <begin position="58"/>
        <end position="78"/>
    </location>
</feature>
<feature type="transmembrane region" description="Helical" evidence="1">
    <location>
        <begin position="94"/>
        <end position="114"/>
    </location>
</feature>
<feature type="transmembrane region" description="Helical" evidence="1">
    <location>
        <begin position="124"/>
        <end position="144"/>
    </location>
</feature>
<feature type="transmembrane region" description="Helical" evidence="1">
    <location>
        <begin position="153"/>
        <end position="173"/>
    </location>
</feature>
<feature type="transmembrane region" description="Helical" evidence="1">
    <location>
        <begin position="178"/>
        <end position="198"/>
    </location>
</feature>
<feature type="transmembrane region" description="Helical" evidence="1">
    <location>
        <begin position="199"/>
        <end position="219"/>
    </location>
</feature>
<feature type="transmembrane region" description="Helical" evidence="1">
    <location>
        <begin position="255"/>
        <end position="275"/>
    </location>
</feature>
<feature type="transmembrane region" description="Helical" evidence="1">
    <location>
        <begin position="291"/>
        <end position="311"/>
    </location>
</feature>
<feature type="transmembrane region" description="Helical" evidence="1">
    <location>
        <begin position="327"/>
        <end position="347"/>
    </location>
</feature>
<feature type="transmembrane region" description="Helical" evidence="1">
    <location>
        <begin position="361"/>
        <end position="381"/>
    </location>
</feature>
<comment type="function">
    <text evidence="1">Na(+)/H(+) antiporter that extrudes sodium in exchange for external protons.</text>
</comment>
<comment type="catalytic activity">
    <reaction evidence="1">
        <text>Na(+)(in) + 2 H(+)(out) = Na(+)(out) + 2 H(+)(in)</text>
        <dbReference type="Rhea" id="RHEA:29251"/>
        <dbReference type="ChEBI" id="CHEBI:15378"/>
        <dbReference type="ChEBI" id="CHEBI:29101"/>
    </reaction>
    <physiologicalReaction direction="left-to-right" evidence="1">
        <dbReference type="Rhea" id="RHEA:29252"/>
    </physiologicalReaction>
</comment>
<comment type="subcellular location">
    <subcellularLocation>
        <location evidence="1">Cell inner membrane</location>
        <topology evidence="1">Multi-pass membrane protein</topology>
    </subcellularLocation>
</comment>
<comment type="similarity">
    <text evidence="1">Belongs to the NhaA Na(+)/H(+) (TC 2.A.33) antiporter family.</text>
</comment>
<reference key="1">
    <citation type="submission" date="2007-07" db="EMBL/GenBank/DDBJ databases">
        <title>Complete genome sequence of Campylobacter jejuni subsp doylei 269.97 isolated from human blood.</title>
        <authorList>
            <person name="Fouts D.E."/>
            <person name="Mongodin E.F."/>
            <person name="Puiu D."/>
            <person name="Sebastian Y."/>
            <person name="Miller W.G."/>
            <person name="Mandrell R.E."/>
            <person name="Lastovica A.J."/>
            <person name="Nelson K.E."/>
        </authorList>
    </citation>
    <scope>NUCLEOTIDE SEQUENCE [LARGE SCALE GENOMIC DNA]</scope>
    <source>
        <strain>ATCC BAA-1458 / RM4099 / 269.97</strain>
    </source>
</reference>
<keyword id="KW-0050">Antiport</keyword>
<keyword id="KW-0997">Cell inner membrane</keyword>
<keyword id="KW-1003">Cell membrane</keyword>
<keyword id="KW-0406">Ion transport</keyword>
<keyword id="KW-0472">Membrane</keyword>
<keyword id="KW-0915">Sodium</keyword>
<keyword id="KW-0739">Sodium transport</keyword>
<keyword id="KW-0812">Transmembrane</keyword>
<keyword id="KW-1133">Transmembrane helix</keyword>
<keyword id="KW-0813">Transport</keyword>
<organism>
    <name type="scientific">Campylobacter jejuni subsp. doylei (strain ATCC BAA-1458 / RM4099 / 269.97)</name>
    <dbReference type="NCBI Taxonomy" id="360109"/>
    <lineage>
        <taxon>Bacteria</taxon>
        <taxon>Pseudomonadati</taxon>
        <taxon>Campylobacterota</taxon>
        <taxon>Epsilonproteobacteria</taxon>
        <taxon>Campylobacterales</taxon>
        <taxon>Campylobacteraceae</taxon>
        <taxon>Campylobacter</taxon>
    </lineage>
</organism>
<gene>
    <name evidence="1" type="primary">nhaA2</name>
    <name type="ordered locus">JJD26997_2016</name>
</gene>
<protein>
    <recommendedName>
        <fullName evidence="1">Na(+)/H(+) antiporter NhaA 2</fullName>
    </recommendedName>
    <alternativeName>
        <fullName evidence="1">Sodium/proton antiporter NhaA 2</fullName>
    </alternativeName>
</protein>